<proteinExistence type="inferred from homology"/>
<protein>
    <recommendedName>
        <fullName>Penaeidin-3g</fullName>
        <shortName>Pen-3g</shortName>
    </recommendedName>
</protein>
<name>PEN3G_PENVA</name>
<reference key="1">
    <citation type="journal article" date="2002" name="Immunogenetics">
        <title>Diversity of the penaeidin antimicrobial peptides in two shrimp species.</title>
        <authorList>
            <person name="Cuthbertson B.J."/>
            <person name="Shepard E.F."/>
            <person name="Chapman R.W."/>
            <person name="Gross P.S."/>
        </authorList>
    </citation>
    <scope>NUCLEOTIDE SEQUENCE [MRNA]</scope>
    <source>
        <tissue>Hemocyte</tissue>
    </source>
</reference>
<dbReference type="EMBL" id="AF390143">
    <property type="protein sequence ID" value="AAK77536.1"/>
    <property type="molecule type" value="mRNA"/>
</dbReference>
<dbReference type="SMR" id="Q963C7"/>
<dbReference type="GO" id="GO:0005737">
    <property type="term" value="C:cytoplasm"/>
    <property type="evidence" value="ECO:0007669"/>
    <property type="project" value="InterPro"/>
</dbReference>
<dbReference type="GO" id="GO:0008061">
    <property type="term" value="F:chitin binding"/>
    <property type="evidence" value="ECO:0007669"/>
    <property type="project" value="UniProtKB-KW"/>
</dbReference>
<dbReference type="GO" id="GO:0042742">
    <property type="term" value="P:defense response to bacterium"/>
    <property type="evidence" value="ECO:0007669"/>
    <property type="project" value="UniProtKB-KW"/>
</dbReference>
<dbReference type="GO" id="GO:0050832">
    <property type="term" value="P:defense response to fungus"/>
    <property type="evidence" value="ECO:0007669"/>
    <property type="project" value="UniProtKB-KW"/>
</dbReference>
<dbReference type="GO" id="GO:0031640">
    <property type="term" value="P:killing of cells of another organism"/>
    <property type="evidence" value="ECO:0007669"/>
    <property type="project" value="UniProtKB-KW"/>
</dbReference>
<dbReference type="InterPro" id="IPR009226">
    <property type="entry name" value="Penaeidin"/>
</dbReference>
<dbReference type="Pfam" id="PF05927">
    <property type="entry name" value="Penaeidin"/>
    <property type="match status" value="1"/>
</dbReference>
<evidence type="ECO:0000250" key="1"/>
<evidence type="ECO:0000255" key="2"/>
<evidence type="ECO:0000305" key="3"/>
<accession>Q963C7</accession>
<feature type="signal peptide" evidence="2">
    <location>
        <begin position="1"/>
        <end position="19"/>
    </location>
</feature>
<feature type="chain" id="PRO_0000023512" description="Penaeidin-3g">
    <location>
        <begin position="20"/>
        <end position="81"/>
    </location>
</feature>
<feature type="modified residue" description="Pyrrolidone carboxylic acid" evidence="1">
    <location>
        <position position="20"/>
    </location>
</feature>
<feature type="modified residue" description="Serine amide" evidence="1">
    <location>
        <position position="81"/>
    </location>
</feature>
<feature type="disulfide bond" evidence="1">
    <location>
        <begin position="51"/>
        <end position="66"/>
    </location>
</feature>
<feature type="disulfide bond" evidence="1">
    <location>
        <begin position="55"/>
        <end position="73"/>
    </location>
</feature>
<feature type="disulfide bond" evidence="1">
    <location>
        <begin position="67"/>
        <end position="74"/>
    </location>
</feature>
<sequence>MRLVVCLVFLASFALVCQGQVYKGGYTRPIPRPPPFVRPLPGGPISPYNGCPVSCRGISFSQARSCCSRLGRCCHVGKGYSG</sequence>
<comment type="function">
    <text evidence="1">Antibacterial and antifungal activity. Presents chitin-binding activity (By similarity).</text>
</comment>
<comment type="subcellular location">
    <subcellularLocation>
        <location>Cytoplasmic granule</location>
    </subcellularLocation>
    <text>Cytoplasmic granules of hemocytes and to a lesser extent in small granules of hemocytes.</text>
</comment>
<comment type="similarity">
    <text evidence="3">Belongs to the penaeidin family.</text>
</comment>
<keyword id="KW-0027">Amidation</keyword>
<keyword id="KW-0044">Antibiotic</keyword>
<keyword id="KW-0929">Antimicrobial</keyword>
<keyword id="KW-0147">Chitin-binding</keyword>
<keyword id="KW-1015">Disulfide bond</keyword>
<keyword id="KW-0295">Fungicide</keyword>
<keyword id="KW-0873">Pyrrolidone carboxylic acid</keyword>
<keyword id="KW-0732">Signal</keyword>
<organism>
    <name type="scientific">Penaeus vannamei</name>
    <name type="common">Whiteleg shrimp</name>
    <name type="synonym">Litopenaeus vannamei</name>
    <dbReference type="NCBI Taxonomy" id="6689"/>
    <lineage>
        <taxon>Eukaryota</taxon>
        <taxon>Metazoa</taxon>
        <taxon>Ecdysozoa</taxon>
        <taxon>Arthropoda</taxon>
        <taxon>Crustacea</taxon>
        <taxon>Multicrustacea</taxon>
        <taxon>Malacostraca</taxon>
        <taxon>Eumalacostraca</taxon>
        <taxon>Eucarida</taxon>
        <taxon>Decapoda</taxon>
        <taxon>Dendrobranchiata</taxon>
        <taxon>Penaeoidea</taxon>
        <taxon>Penaeidae</taxon>
        <taxon>Penaeus</taxon>
    </lineage>
</organism>